<reference key="1">
    <citation type="journal article" date="1984" name="Proc. Natl. Acad. Sci. U.S.A.">
        <title>Cloning, nucleotide sequence, and expression in Escherichia coli of the exotoxin A structural gene of Pseudomonas aeruginosa.</title>
        <authorList>
            <person name="Gray G.L."/>
            <person name="Smith D.H."/>
            <person name="Baldridge J.S."/>
            <person name="Harkins R.N."/>
            <person name="Vasil M.L."/>
            <person name="Chen E.Y."/>
            <person name="Heyneker H.L."/>
        </authorList>
    </citation>
    <scope>NUCLEOTIDE SEQUENCE [GENOMIC DNA]</scope>
    <scope>PROTEIN SEQUENCE OF 26-53</scope>
</reference>
<reference key="2">
    <citation type="journal article" date="2000" name="Nature">
        <title>Complete genome sequence of Pseudomonas aeruginosa PAO1, an opportunistic pathogen.</title>
        <authorList>
            <person name="Stover C.K."/>
            <person name="Pham X.-Q.T."/>
            <person name="Erwin A.L."/>
            <person name="Mizoguchi S.D."/>
            <person name="Warrener P."/>
            <person name="Hickey M.J."/>
            <person name="Brinkman F.S.L."/>
            <person name="Hufnagle W.O."/>
            <person name="Kowalik D.J."/>
            <person name="Lagrou M."/>
            <person name="Garber R.L."/>
            <person name="Goltry L."/>
            <person name="Tolentino E."/>
            <person name="Westbrock-Wadman S."/>
            <person name="Yuan Y."/>
            <person name="Brody L.L."/>
            <person name="Coulter S.N."/>
            <person name="Folger K.R."/>
            <person name="Kas A."/>
            <person name="Larbig K."/>
            <person name="Lim R.M."/>
            <person name="Smith K.A."/>
            <person name="Spencer D.H."/>
            <person name="Wong G.K.-S."/>
            <person name="Wu Z."/>
            <person name="Paulsen I.T."/>
            <person name="Reizer J."/>
            <person name="Saier M.H. Jr."/>
            <person name="Hancock R.E.W."/>
            <person name="Lory S."/>
            <person name="Olson M.V."/>
        </authorList>
    </citation>
    <scope>NUCLEOTIDE SEQUENCE [LARGE SCALE GENOMIC DNA]</scope>
    <source>
        <strain>ATCC 15692 / DSM 22644 / CIP 104116 / JCM 14847 / LMG 12228 / 1C / PRS 101 / PAO1</strain>
    </source>
</reference>
<reference key="3">
    <citation type="journal article" date="1987" name="J. Biol. Chem.">
        <title>Active site of Pseudomonas aeruginosa exotoxin A. Glutamic acid 553 is photolabeled by NAD and shows functional homology with glutamic acid 148 of diphtheria toxin.</title>
        <authorList>
            <person name="Carroll S.F."/>
            <person name="Collier R.J."/>
        </authorList>
    </citation>
    <scope>ACTIVE SITE</scope>
</reference>
<reference key="4">
    <citation type="journal article" date="1990" name="J. Biol. Chem.">
        <title>Mutagenesis of Pseudomonas exotoxin in identification of sequences responsible for the animal toxicity.</title>
        <authorList>
            <person name="Chaudhary V.K."/>
            <person name="Jinno Y."/>
            <person name="Galo M.G."/>
            <person name="Fitzgerald D."/>
            <person name="Pastan I."/>
        </authorList>
    </citation>
    <scope>DOMAINS</scope>
    <scope>MUTAGENESIS OF LYS-82; 266-PRO--PHE-275 AND 271-HIS--HIS-274</scope>
</reference>
<reference key="5">
    <citation type="journal article" date="1990" name="Eur. J. Biochem.">
        <title>Biochemical and immunochemical studies of proteolytic fragments of exotoxin A from Pseudomonas aeruginosa.</title>
        <authorList>
            <person name="Bourdenet S."/>
            <person name="Vacheron M.-J."/>
            <person name="Guinand M."/>
            <person name="Michel G."/>
            <person name="Arminjon F."/>
        </authorList>
    </citation>
    <scope>PROTEIN SEQUENCE OF 396-408 AND 415-424</scope>
    <scope>FUNCTION</scope>
    <scope>CATALYTIC ACTIVITY</scope>
    <scope>DOMAINS</scope>
</reference>
<reference key="6">
    <citation type="journal article" date="1992" name="J. Biol. Chem.">
        <title>The alpha 2-macroglobulin receptor/low density lipoprotein receptor-related protein binds and internalizes Pseudomonas exotoxin A.</title>
        <authorList>
            <person name="Kounnas M.Z."/>
            <person name="Morris R.E."/>
            <person name="Thompson M.R."/>
            <person name="FitzGerald D.J."/>
            <person name="Strickland D.K."/>
            <person name="Saelinger C.B."/>
        </authorList>
    </citation>
    <scope>RECEPTOR-BINDING</scope>
    <scope>MUTAGENESIS OF LYS-82</scope>
</reference>
<reference key="7">
    <citation type="journal article" date="1999" name="Biochemistry">
        <title>Reduction of furin-nicked Pseudomonas exotoxin A: an unfolding story.</title>
        <authorList>
            <person name="McKee M.L."/>
            <person name="FitzGerald D.J."/>
        </authorList>
    </citation>
    <scope>DISULFIDE BOND</scope>
</reference>
<reference key="8">
    <citation type="journal article" date="2008" name="J. Biol. Chem.">
        <title>Cholix toxin, a novel ADP-ribosylating factor from Vibrio cholerae.</title>
        <authorList>
            <person name="Jorgensen R."/>
            <person name="Purdy A.E."/>
            <person name="Fieldhouse R.J."/>
            <person name="Kimber M.S."/>
            <person name="Bartlett D.H."/>
            <person name="Merrill A.R."/>
        </authorList>
    </citation>
    <scope>FUNCTION AS A TOXIN</scope>
    <scope>FUNCTION AS A GLYCOHYDROLASE</scope>
    <scope>FUNCTION AS AN ADP-RIBOSYLTRANSFERASE</scope>
    <scope>CATALYTIC ACTIVITY</scope>
    <scope>MUTAGENESIS OF GLU-578</scope>
</reference>
<reference key="9">
    <citation type="journal article" date="2011" name="Antimicrob. Agents Chemother.">
        <title>Newly discovered and characterized antivirulence compounds inhibit bacterial mono-ADP-ribosyltransferase toxins.</title>
        <authorList>
            <person name="Turgeon Z."/>
            <person name="Jorgensen R."/>
            <person name="Visschedyk D."/>
            <person name="Edwards P.R."/>
            <person name="Legree S."/>
            <person name="McGregor C."/>
            <person name="Fieldhouse R.J."/>
            <person name="Mangroo D."/>
            <person name="Schapira M."/>
            <person name="Merrill A.R."/>
        </authorList>
    </citation>
    <scope>ACTIVITY REGULATION</scope>
    <scope>TOXIC DOSE</scope>
</reference>
<reference key="10">
    <citation type="journal article" date="1995" name="Proc. Natl. Acad. Sci. U.S.A.">
        <title>The crystal structure of Pseudomonas aeruginosa exotoxin domain III with nicotinamide and AMP: conformational differences with the intact exotoxin.</title>
        <authorList>
            <person name="Li M."/>
            <person name="Dyda F."/>
            <person name="Benhar I."/>
            <person name="Pastan I."/>
            <person name="Davies D.R."/>
        </authorList>
    </citation>
    <scope>X-RAY CRYSTALLOGRAPHY (3.0 ANGSTROMS) OF 424-638</scope>
</reference>
<reference key="11">
    <citation type="journal article" date="1996" name="Proc. Natl. Acad. Sci. U.S.A.">
        <title>Crystal structure of the catalytic domain of Pseudomonas exotoxin A complexed with a nicotinamide adenine dinucleotide analog: implications for the activation process and for ADP ribosylation.</title>
        <authorList>
            <person name="Li M."/>
            <person name="Dyda F."/>
            <person name="Benhar I."/>
            <person name="Pastan I."/>
            <person name="Davies D.R."/>
        </authorList>
    </citation>
    <scope>X-RAY CRYSTALLOGRAPHY (2.3 ANGSTROMS) OF 424-638</scope>
</reference>
<reference key="12">
    <citation type="journal article" date="2008" name="EMBO Rep.">
        <title>The nature and character of the transition state for the ADP-ribosyltransferase reaction.</title>
        <authorList>
            <person name="Jorgensen R."/>
            <person name="Wang Y."/>
            <person name="Visschedyk D."/>
            <person name="Merrill A.R."/>
        </authorList>
    </citation>
    <scope>X-RAY CRYSTALLOGRAPHY (2.35 ANGSTROMS) OF 425-630 IN COMPLEX WITH YEAST EEF2 AND NAD</scope>
    <scope>MUTAGENESIS OF ARG-481; GLU-571; ARG-576 AND GLU-578</scope>
</reference>
<feature type="signal peptide" evidence="10">
    <location>
        <begin position="1"/>
        <end position="25"/>
    </location>
</feature>
<feature type="chain" id="PRO_0000019365" description="Exotoxin A">
    <location>
        <begin position="26"/>
        <end position="638"/>
    </location>
</feature>
<feature type="region of interest" description="Domain Ia (required for target cell recognition)" evidence="14">
    <location>
        <begin position="26"/>
        <end position="277"/>
    </location>
</feature>
<feature type="region of interest" description="II (required for translocation in target cell cytoplasm)">
    <location>
        <begin position="278"/>
        <end position="389"/>
    </location>
</feature>
<feature type="region of interest" description="Domain Ib">
    <location>
        <begin position="390"/>
        <end position="429"/>
    </location>
</feature>
<feature type="region of interest" description="III (required for ADP-ribosyl activity)">
    <location>
        <begin position="430"/>
        <end position="638"/>
    </location>
</feature>
<feature type="region of interest" description="Disordered" evidence="1">
    <location>
        <begin position="596"/>
        <end position="638"/>
    </location>
</feature>
<feature type="active site" evidence="9">
    <location>
        <position position="578"/>
    </location>
</feature>
<feature type="binding site" evidence="5">
    <location>
        <begin position="465"/>
        <end position="467"/>
    </location>
    <ligand>
        <name>NAD(+)</name>
        <dbReference type="ChEBI" id="CHEBI:57540"/>
    </ligand>
</feature>
<feature type="binding site" evidence="5">
    <location>
        <position position="474"/>
    </location>
    <ligand>
        <name>NAD(+)</name>
        <dbReference type="ChEBI" id="CHEBI:57540"/>
    </ligand>
</feature>
<feature type="binding site" evidence="5">
    <location>
        <begin position="479"/>
        <end position="485"/>
    </location>
    <ligand>
        <name>NAD(+)</name>
        <dbReference type="ChEBI" id="CHEBI:57540"/>
    </ligand>
</feature>
<feature type="binding site" evidence="5">
    <location>
        <position position="578"/>
    </location>
    <ligand>
        <name>NAD(+)</name>
        <dbReference type="ChEBI" id="CHEBI:57540"/>
    </ligand>
</feature>
<feature type="disulfide bond" evidence="2">
    <location>
        <begin position="290"/>
        <end position="312"/>
    </location>
</feature>
<feature type="mutagenesis site" description="Loss of toxicity, no binding to LRP1 receptor. 100-fold less cytotoxic, 5-fold less toxic in mice." evidence="3 7">
    <original>K</original>
    <variation>E</variation>
    <location>
        <position position="82"/>
    </location>
</feature>
<feature type="mutagenesis site" description="Loss of cytotoxicity; when associated with E-82." evidence="7">
    <location>
        <begin position="266"/>
        <end position="275"/>
    </location>
</feature>
<feature type="mutagenesis site" description="Slight decrease in cytotoxicity. Loss of cytotoxicity, 150-fold less toxic in mice; when associated with E-82." evidence="7">
    <original>HRLH</original>
    <variation>EELE</variation>
    <location>
        <begin position="271"/>
        <end position="274"/>
    </location>
</feature>
<feature type="mutagenesis site" description="Loss of cytotoxicity; when associated with E-82." evidence="7">
    <original>HRLH</original>
    <variation>GGLG</variation>
    <location>
        <begin position="271"/>
        <end position="274"/>
    </location>
</feature>
<feature type="mutagenesis site" description="100-fold reduction of cytotoxicity; when associated with E-82." evidence="7">
    <original>HRLH</original>
    <variation>KKLK</variation>
    <location>
        <begin position="271"/>
        <end position="274"/>
    </location>
</feature>
<feature type="mutagenesis site" description="52-fold decrease in ADPRT activity, 55-fold reduction in GH activity, 31-fold increase in dissociation constant for NAD(+)." evidence="5">
    <original>R</original>
    <variation>H</variation>
    <location>
        <position position="481"/>
    </location>
</feature>
<feature type="mutagenesis site" description="833-fold decrease in ADPRT activity, 4-fold reduction in GH activity, 2-fold increase in dissociation constant for NAD(+)." evidence="5">
    <original>E</original>
    <variation>A</variation>
    <location>
        <position position="571"/>
    </location>
</feature>
<feature type="mutagenesis site" description="2-fold decrease in ADPRT activity, 14-fold reduction in GH activity, 3-fold increase in dissociation constant for NAD(+)." evidence="5">
    <original>R</original>
    <variation>A</variation>
    <location>
        <position position="576"/>
    </location>
</feature>
<feature type="mutagenesis site" description="666-fold decrease in ADPRT activity, 14-fold reduction in GH activity, 2-fold increase in dissociation constant for NAD(+), loss of toxicity against mouse cells." evidence="4 5">
    <original>E</original>
    <variation>A</variation>
    <location>
        <position position="578"/>
    </location>
</feature>
<feature type="sequence conflict" description="In Ref. 1; AAB59097." evidence="13" ref="1">
    <original>T</original>
    <variation>I</variation>
    <location>
        <position position="4"/>
    </location>
</feature>
<feature type="sequence conflict" description="In Ref. 1; AAB59097." evidence="13" ref="1">
    <original>F</original>
    <variation>S</variation>
    <location>
        <position position="22"/>
    </location>
</feature>
<feature type="sequence conflict" description="In Ref. 1; AAB59097." evidence="13" ref="1">
    <original>A</original>
    <variation>T</variation>
    <location>
        <position position="204"/>
    </location>
</feature>
<feature type="sequence conflict" description="In Ref. 1; AAB59097." evidence="13" ref="1">
    <original>S</original>
    <variation>N</variation>
    <location>
        <position position="389"/>
    </location>
</feature>
<feature type="sequence conflict" description="In Ref. 1; AAB59097." evidence="13" ref="1">
    <original>I</original>
    <variation>V</variation>
    <location>
        <position position="432"/>
    </location>
</feature>
<feature type="sequence conflict" description="In Ref. 1; AAB59097." evidence="13" ref="1">
    <original>G</original>
    <variation>S</variation>
    <location>
        <position position="540"/>
    </location>
</feature>
<feature type="helix" evidence="16">
    <location>
        <begin position="32"/>
        <end position="35"/>
    </location>
</feature>
<feature type="strand" evidence="16">
    <location>
        <begin position="36"/>
        <end position="43"/>
    </location>
</feature>
<feature type="strand" evidence="16">
    <location>
        <begin position="49"/>
        <end position="54"/>
    </location>
</feature>
<feature type="helix" evidence="16">
    <location>
        <begin position="57"/>
        <end position="60"/>
    </location>
</feature>
<feature type="strand" evidence="16">
    <location>
        <begin position="63"/>
        <end position="74"/>
    </location>
</feature>
<feature type="turn" evidence="16">
    <location>
        <begin position="76"/>
        <end position="79"/>
    </location>
</feature>
<feature type="strand" evidence="16">
    <location>
        <begin position="80"/>
        <end position="85"/>
    </location>
</feature>
<feature type="turn" evidence="16">
    <location>
        <begin position="86"/>
        <end position="88"/>
    </location>
</feature>
<feature type="strand" evidence="16">
    <location>
        <begin position="89"/>
        <end position="93"/>
    </location>
</feature>
<feature type="strand" evidence="16">
    <location>
        <begin position="95"/>
        <end position="102"/>
    </location>
</feature>
<feature type="strand" evidence="16">
    <location>
        <begin position="106"/>
        <end position="108"/>
    </location>
</feature>
<feature type="strand" evidence="16">
    <location>
        <begin position="110"/>
        <end position="115"/>
    </location>
</feature>
<feature type="strand" evidence="16">
    <location>
        <begin position="117"/>
        <end position="120"/>
    </location>
</feature>
<feature type="strand" evidence="16">
    <location>
        <begin position="122"/>
        <end position="131"/>
    </location>
</feature>
<feature type="strand" evidence="16">
    <location>
        <begin position="136"/>
        <end position="145"/>
    </location>
</feature>
<feature type="strand" evidence="16">
    <location>
        <begin position="151"/>
        <end position="154"/>
    </location>
</feature>
<feature type="strand" evidence="16">
    <location>
        <begin position="157"/>
        <end position="161"/>
    </location>
</feature>
<feature type="helix" evidence="16">
    <location>
        <begin position="164"/>
        <end position="170"/>
    </location>
</feature>
<feature type="strand" evidence="16">
    <location>
        <begin position="173"/>
        <end position="180"/>
    </location>
</feature>
<feature type="strand" evidence="16">
    <location>
        <begin position="189"/>
        <end position="201"/>
    </location>
</feature>
<feature type="helix" evidence="16">
    <location>
        <begin position="213"/>
        <end position="216"/>
    </location>
</feature>
<feature type="helix" evidence="16">
    <location>
        <begin position="218"/>
        <end position="223"/>
    </location>
</feature>
<feature type="helix" evidence="16">
    <location>
        <begin position="225"/>
        <end position="227"/>
    </location>
</feature>
<feature type="helix" evidence="16">
    <location>
        <begin position="230"/>
        <end position="235"/>
    </location>
</feature>
<feature type="helix" evidence="16">
    <location>
        <begin position="243"/>
        <end position="246"/>
    </location>
</feature>
<feature type="strand" evidence="16">
    <location>
        <begin position="249"/>
        <end position="255"/>
    </location>
</feature>
<feature type="strand" evidence="16">
    <location>
        <begin position="270"/>
        <end position="273"/>
    </location>
</feature>
<feature type="helix" evidence="16">
    <location>
        <begin position="280"/>
        <end position="290"/>
    </location>
</feature>
<feature type="helix" evidence="16">
    <location>
        <begin position="294"/>
        <end position="298"/>
    </location>
</feature>
<feature type="helix" evidence="16">
    <location>
        <begin position="307"/>
        <end position="311"/>
    </location>
</feature>
<feature type="helix" evidence="16">
    <location>
        <begin position="313"/>
        <end position="325"/>
    </location>
</feature>
<feature type="helix" evidence="16">
    <location>
        <begin position="330"/>
        <end position="332"/>
    </location>
</feature>
<feature type="helix" evidence="16">
    <location>
        <begin position="333"/>
        <end position="342"/>
    </location>
</feature>
<feature type="turn" evidence="16">
    <location>
        <begin position="344"/>
        <end position="347"/>
    </location>
</feature>
<feature type="helix" evidence="16">
    <location>
        <begin position="348"/>
        <end position="356"/>
    </location>
</feature>
<feature type="helix" evidence="16">
    <location>
        <begin position="358"/>
        <end position="376"/>
    </location>
</feature>
<feature type="helix" evidence="16">
    <location>
        <begin position="384"/>
        <end position="387"/>
    </location>
</feature>
<feature type="strand" evidence="16">
    <location>
        <begin position="392"/>
        <end position="396"/>
    </location>
</feature>
<feature type="strand" evidence="16">
    <location>
        <begin position="399"/>
        <end position="403"/>
    </location>
</feature>
<feature type="helix" evidence="16">
    <location>
        <begin position="408"/>
        <end position="410"/>
    </location>
</feature>
<feature type="strand" evidence="16">
    <location>
        <begin position="413"/>
        <end position="418"/>
    </location>
</feature>
<feature type="helix" evidence="16">
    <location>
        <begin position="422"/>
        <end position="424"/>
    </location>
</feature>
<feature type="strand" evidence="16">
    <location>
        <begin position="428"/>
        <end position="430"/>
    </location>
</feature>
<feature type="strand" evidence="15">
    <location>
        <begin position="433"/>
        <end position="435"/>
    </location>
</feature>
<feature type="strand" evidence="15">
    <location>
        <begin position="438"/>
        <end position="440"/>
    </location>
</feature>
<feature type="helix" evidence="16">
    <location>
        <begin position="444"/>
        <end position="456"/>
    </location>
</feature>
<feature type="strand" evidence="16">
    <location>
        <begin position="459"/>
        <end position="467"/>
    </location>
</feature>
<feature type="helix" evidence="16">
    <location>
        <begin position="469"/>
        <end position="477"/>
    </location>
</feature>
<feature type="helix" evidence="16">
    <location>
        <begin position="489"/>
        <end position="491"/>
    </location>
</feature>
<feature type="strand" evidence="16">
    <location>
        <begin position="493"/>
        <end position="499"/>
    </location>
</feature>
<feature type="helix" evidence="16">
    <location>
        <begin position="500"/>
        <end position="504"/>
    </location>
</feature>
<feature type="strand" evidence="16">
    <location>
        <begin position="522"/>
        <end position="529"/>
    </location>
</feature>
<feature type="helix" evidence="16">
    <location>
        <begin position="530"/>
        <end position="535"/>
    </location>
</feature>
<feature type="strand" evidence="16">
    <location>
        <begin position="536"/>
        <end position="538"/>
    </location>
</feature>
<feature type="strand" evidence="17">
    <location>
        <begin position="543"/>
        <end position="545"/>
    </location>
</feature>
<feature type="helix" evidence="16">
    <location>
        <begin position="548"/>
        <end position="556"/>
    </location>
</feature>
<feature type="strand" evidence="15">
    <location>
        <begin position="558"/>
        <end position="561"/>
    </location>
</feature>
<feature type="strand" evidence="16">
    <location>
        <begin position="566"/>
        <end position="572"/>
    </location>
</feature>
<feature type="strand" evidence="16">
    <location>
        <begin position="577"/>
        <end position="581"/>
    </location>
</feature>
<feature type="helix" evidence="16">
    <location>
        <begin position="583"/>
        <end position="587"/>
    </location>
</feature>
<feature type="strand" evidence="16">
    <location>
        <begin position="590"/>
        <end position="593"/>
    </location>
</feature>
<feature type="helix" evidence="16">
    <location>
        <begin position="609"/>
        <end position="611"/>
    </location>
</feature>
<feature type="helix" evidence="16">
    <location>
        <begin position="614"/>
        <end position="617"/>
    </location>
</feature>
<feature type="strand" evidence="16">
    <location>
        <begin position="626"/>
        <end position="628"/>
    </location>
</feature>
<name>TOXA_PSEAE</name>
<evidence type="ECO:0000256" key="1">
    <source>
        <dbReference type="SAM" id="MobiDB-lite"/>
    </source>
</evidence>
<evidence type="ECO:0000269" key="2">
    <source>
    </source>
</evidence>
<evidence type="ECO:0000269" key="3">
    <source>
    </source>
</evidence>
<evidence type="ECO:0000269" key="4">
    <source>
    </source>
</evidence>
<evidence type="ECO:0000269" key="5">
    <source>
    </source>
</evidence>
<evidence type="ECO:0000269" key="6">
    <source>
    </source>
</evidence>
<evidence type="ECO:0000269" key="7">
    <source>
    </source>
</evidence>
<evidence type="ECO:0000269" key="8">
    <source>
    </source>
</evidence>
<evidence type="ECO:0000269" key="9">
    <source>
    </source>
</evidence>
<evidence type="ECO:0000269" key="10">
    <source>
    </source>
</evidence>
<evidence type="ECO:0000303" key="11">
    <source>
    </source>
</evidence>
<evidence type="ECO:0000303" key="12">
    <source>
    </source>
</evidence>
<evidence type="ECO:0000305" key="13"/>
<evidence type="ECO:0000305" key="14">
    <source>
    </source>
</evidence>
<evidence type="ECO:0007829" key="15">
    <source>
        <dbReference type="PDB" id="1DMA"/>
    </source>
</evidence>
<evidence type="ECO:0007829" key="16">
    <source>
        <dbReference type="PDB" id="1IKP"/>
    </source>
</evidence>
<evidence type="ECO:0007829" key="17">
    <source>
        <dbReference type="PDB" id="3B8H"/>
    </source>
</evidence>
<protein>
    <recommendedName>
        <fullName evidence="12">Exotoxin A</fullName>
        <shortName evidence="12">ETA</shortName>
        <ecNumber evidence="8">2.4.2.36</ecNumber>
    </recommendedName>
    <alternativeName>
        <fullName>NAD(+)--diphthamide ADP-ribosyltransferase</fullName>
    </alternativeName>
    <alternativeName>
        <fullName evidence="11">Pseudomonas exotoxin</fullName>
        <shortName evidence="11">PE</shortName>
    </alternativeName>
</protein>
<accession>P11439</accession>
<accession>Q9I4I7</accession>
<keyword id="KW-0002">3D-structure</keyword>
<keyword id="KW-0903">Direct protein sequencing</keyword>
<keyword id="KW-1015">Disulfide bond</keyword>
<keyword id="KW-0328">Glycosyltransferase</keyword>
<keyword id="KW-0520">NAD</keyword>
<keyword id="KW-0548">Nucleotidyltransferase</keyword>
<keyword id="KW-1185">Reference proteome</keyword>
<keyword id="KW-0732">Signal</keyword>
<keyword id="KW-0800">Toxin</keyword>
<keyword id="KW-0808">Transferase</keyword>
<keyword id="KW-0843">Virulence</keyword>
<sequence>MHLTPHWIPLVASLGLLAGGSFASAAEEAFDLWNECAKACVLDLKDGVRSSRMSVDPAIADTNGQGVLHYSMVLEGGNDALKLAIDNALSITSDGLTIRLEGGVEPNKPVRYSYTRQARGSWSLNWLVPIGHEKPSNIKVFIHELNAGNQLSHMSPIYTIEMGDELLAKLARDATFFVRAHESNEMQPTLAISHAGVSVVMAQAQPRREKRWSEWASGKVLCLLDPLDGVYNYLAQQRCNLDDTWEGKIYRVLAGNPAKHDLDIKPTVISHRLHFPEGGSLAALTAHQACHLPLETFTRHRQPRGWEQLEQCGYPVQRLVALYLAARLSWNQVDQVIRNALASPGSGGDLGEAIREQPEQARLALTLAAAESERFVRQGTGNDEAGAASADVVSLTCPVAAGECAGPADSGDALLERNYPTGAEFLGDGGDISFSTRGTQNWTVERLLQAHRQLEERGYVFVGYHGTFLEAAQSIVFGGVRARSQDLDAIWRGFYIAGDPALAYGYAQDQEPDARGRIRNGALLRVYVPRSSLPGFYRTGLTLAAPEAAGEVERLIGHPLPLRLDAITGPEEEGGRLETILGWPLAERTVVIPSAIPTDPRNVGGDLDPSSIPDKEQAISALPDYASQPGKPPREDLK</sequence>
<proteinExistence type="evidence at protein level"/>
<comment type="function">
    <text evidence="4 6 8">An NAD-dependent ADP-ribosyltransferase (ADPRT). Catalyzes the transfer of the ADP ribosyl moiety of oxidized NAD (NAD(+)) onto eukaryotic elongation factor 2 (eEF-2) thus arresting protein synthesis (PubMed:18276581, PubMed:2170123). Has an LD(50) of 65 ng/ml against the human lung epithelial cell line C38 (PubMed:21135177).</text>
</comment>
<comment type="catalytic activity">
    <reaction evidence="4 8">
        <text>diphthamide-[translation elongation factor 2] + NAD(+) = N-(ADP-D-ribosyl)diphthamide-[translation elongation factor 2] + nicotinamide + H(+)</text>
        <dbReference type="Rhea" id="RHEA:11820"/>
        <dbReference type="Rhea" id="RHEA-COMP:10174"/>
        <dbReference type="Rhea" id="RHEA-COMP:10175"/>
        <dbReference type="ChEBI" id="CHEBI:15378"/>
        <dbReference type="ChEBI" id="CHEBI:16692"/>
        <dbReference type="ChEBI" id="CHEBI:17154"/>
        <dbReference type="ChEBI" id="CHEBI:57540"/>
        <dbReference type="ChEBI" id="CHEBI:82697"/>
        <dbReference type="EC" id="2.4.2.36"/>
    </reaction>
</comment>
<comment type="activity regulation">
    <text evidence="6">Inhibited by 1,8-naphthalimide (NAP) as well as a number of poly(ADP-ribose) polymerase inhibitors and other compounds.</text>
</comment>
<comment type="biophysicochemical properties">
    <kinetics>
        <KM>121 uM for NAD</KM>
        <text>For ADP-ribosyltransferase activity of the catalytic fragment 399-605.</text>
    </kinetics>
</comment>
<comment type="domain">
    <text evidence="8 14">Domain I (which is divided into 2 non-contiguous regions Ia and Ib) is required for binding to cells, but not for ADPRT activity (Probable) (PubMed:2170123). A subtilisin-digested fragment starting about residue 417 and extending to the C-terminus has full ADPRT activity (PubMed:2170123).</text>
</comment>
<comment type="PTM">
    <text>The 8 cysteines participate in intrachain disulfide bonds.</text>
</comment>
<gene>
    <name evidence="12" type="primary">eta</name>
    <name type="ordered locus">PA1148</name>
</gene>
<organism>
    <name type="scientific">Pseudomonas aeruginosa (strain ATCC 15692 / DSM 22644 / CIP 104116 / JCM 14847 / LMG 12228 / 1C / PRS 101 / PAO1)</name>
    <dbReference type="NCBI Taxonomy" id="208964"/>
    <lineage>
        <taxon>Bacteria</taxon>
        <taxon>Pseudomonadati</taxon>
        <taxon>Pseudomonadota</taxon>
        <taxon>Gammaproteobacteria</taxon>
        <taxon>Pseudomonadales</taxon>
        <taxon>Pseudomonadaceae</taxon>
        <taxon>Pseudomonas</taxon>
    </lineage>
</organism>
<dbReference type="EC" id="2.4.2.36" evidence="8"/>
<dbReference type="EMBL" id="K01397">
    <property type="protein sequence ID" value="AAB59097.1"/>
    <property type="molecule type" value="Genomic_DNA"/>
</dbReference>
<dbReference type="EMBL" id="AE004091">
    <property type="protein sequence ID" value="AAG04537.1"/>
    <property type="molecule type" value="Genomic_DNA"/>
</dbReference>
<dbReference type="PIR" id="A30347">
    <property type="entry name" value="A30347"/>
</dbReference>
<dbReference type="PIR" id="C83503">
    <property type="entry name" value="C83503"/>
</dbReference>
<dbReference type="PDB" id="1AER">
    <property type="method" value="X-ray"/>
    <property type="resolution" value="2.30 A"/>
    <property type="chains" value="A/B=425-634"/>
</dbReference>
<dbReference type="PDB" id="1DMA">
    <property type="method" value="X-ray"/>
    <property type="resolution" value="2.50 A"/>
    <property type="chains" value="A/B=425-638"/>
</dbReference>
<dbReference type="PDB" id="1IKP">
    <property type="method" value="X-ray"/>
    <property type="resolution" value="1.45 A"/>
    <property type="chains" value="A=26-638"/>
</dbReference>
<dbReference type="PDB" id="1IKQ">
    <property type="method" value="X-ray"/>
    <property type="resolution" value="1.62 A"/>
    <property type="chains" value="A=26-638"/>
</dbReference>
<dbReference type="PDB" id="1XK9">
    <property type="method" value="X-ray"/>
    <property type="resolution" value="2.10 A"/>
    <property type="chains" value="A/B=424-638"/>
</dbReference>
<dbReference type="PDB" id="1ZM2">
    <property type="method" value="X-ray"/>
    <property type="resolution" value="3.07 A"/>
    <property type="chains" value="B/D/F=424-630"/>
</dbReference>
<dbReference type="PDB" id="1ZM3">
    <property type="method" value="X-ray"/>
    <property type="resolution" value="3.07 A"/>
    <property type="chains" value="B/D/F=424-630"/>
</dbReference>
<dbReference type="PDB" id="1ZM4">
    <property type="method" value="X-ray"/>
    <property type="resolution" value="2.90 A"/>
    <property type="chains" value="B/D/F=424-630"/>
</dbReference>
<dbReference type="PDB" id="1ZM9">
    <property type="method" value="X-ray"/>
    <property type="resolution" value="2.80 A"/>
    <property type="chains" value="B/D/F=424-630"/>
</dbReference>
<dbReference type="PDB" id="2ZIT">
    <property type="method" value="X-ray"/>
    <property type="resolution" value="3.00 A"/>
    <property type="chains" value="B/D/F=425-630"/>
</dbReference>
<dbReference type="PDB" id="3B78">
    <property type="method" value="X-ray"/>
    <property type="resolution" value="2.50 A"/>
    <property type="chains" value="B/D/F=425-630"/>
</dbReference>
<dbReference type="PDB" id="3B82">
    <property type="method" value="X-ray"/>
    <property type="resolution" value="2.35 A"/>
    <property type="chains" value="B/D/F=425-630"/>
</dbReference>
<dbReference type="PDB" id="3B8H">
    <property type="method" value="X-ray"/>
    <property type="resolution" value="2.50 A"/>
    <property type="chains" value="B/D/F=425-630"/>
</dbReference>
<dbReference type="PDBsum" id="1AER"/>
<dbReference type="PDBsum" id="1DMA"/>
<dbReference type="PDBsum" id="1IKP"/>
<dbReference type="PDBsum" id="1IKQ"/>
<dbReference type="PDBsum" id="1XK9"/>
<dbReference type="PDBsum" id="1ZM2"/>
<dbReference type="PDBsum" id="1ZM3"/>
<dbReference type="PDBsum" id="1ZM4"/>
<dbReference type="PDBsum" id="1ZM9"/>
<dbReference type="PDBsum" id="2ZIT"/>
<dbReference type="PDBsum" id="3B78"/>
<dbReference type="PDBsum" id="3B82"/>
<dbReference type="PDBsum" id="3B8H"/>
<dbReference type="SMR" id="P11439"/>
<dbReference type="STRING" id="208964.PA1148"/>
<dbReference type="BindingDB" id="P11439"/>
<dbReference type="DrugBank" id="DB02701">
    <property type="generic name" value="Nicotinamide"/>
</dbReference>
<dbReference type="DrugBank" id="DB08348">
    <property type="generic name" value="N~2~,N~2~-DIMETHYL-N~1~-(6-OXO-5,6-DIHYDROPHENANTHRIDIN-2-YL)GLYCINAMIDE"/>
</dbReference>
<dbReference type="TCDB" id="1.C.73.1.1">
    <property type="family name" value="the pseudomonas exotoxin a (p-exoa) family"/>
</dbReference>
<dbReference type="PaxDb" id="208964-PA1148"/>
<dbReference type="ABCD" id="P11439">
    <property type="antibodies" value="2 sequenced antibodies"/>
</dbReference>
<dbReference type="KEGG" id="pae:PA1148"/>
<dbReference type="PATRIC" id="fig|208964.12.peg.1194"/>
<dbReference type="PseudoCAP" id="PA1148"/>
<dbReference type="HOGENOM" id="CLU_426954_0_0_6"/>
<dbReference type="InParanoid" id="P11439"/>
<dbReference type="OrthoDB" id="6479700at2"/>
<dbReference type="BioCyc" id="MetaCyc:MONOMER-15587"/>
<dbReference type="BioCyc" id="PAER208964:G1FZ6-1174-MONOMER"/>
<dbReference type="BRENDA" id="2.4.2.36">
    <property type="organism ID" value="5087"/>
</dbReference>
<dbReference type="SABIO-RK" id="P11439"/>
<dbReference type="EvolutionaryTrace" id="P11439"/>
<dbReference type="Proteomes" id="UP000002438">
    <property type="component" value="Chromosome"/>
</dbReference>
<dbReference type="GO" id="GO:0047286">
    <property type="term" value="F:NAD+-diphthamide ADP-ribosyltransferase activity"/>
    <property type="evidence" value="ECO:0000314"/>
    <property type="project" value="CACAO"/>
</dbReference>
<dbReference type="GO" id="GO:0016779">
    <property type="term" value="F:nucleotidyltransferase activity"/>
    <property type="evidence" value="ECO:0007669"/>
    <property type="project" value="UniProtKB-KW"/>
</dbReference>
<dbReference type="GO" id="GO:0090729">
    <property type="term" value="F:toxin activity"/>
    <property type="evidence" value="ECO:0007669"/>
    <property type="project" value="UniProtKB-KW"/>
</dbReference>
<dbReference type="GO" id="GO:0001907">
    <property type="term" value="P:symbiont-mediated killing of host cell"/>
    <property type="evidence" value="ECO:0000269"/>
    <property type="project" value="SigSci"/>
</dbReference>
<dbReference type="GO" id="GO:0141155">
    <property type="term" value="P:symbiont-mediated suppression of host translation elongation"/>
    <property type="evidence" value="ECO:0000269"/>
    <property type="project" value="SigSci"/>
</dbReference>
<dbReference type="CDD" id="cd01436">
    <property type="entry name" value="Dipth_tox_like"/>
    <property type="match status" value="1"/>
</dbReference>
<dbReference type="Gene3D" id="2.60.120.200">
    <property type="match status" value="1"/>
</dbReference>
<dbReference type="Gene3D" id="3.90.175.10">
    <property type="entry name" value="Diphtheria Toxin, domain 1"/>
    <property type="match status" value="1"/>
</dbReference>
<dbReference type="Gene3D" id="3.90.1350.10">
    <property type="entry name" value="Exotoxin A, middle domain"/>
    <property type="match status" value="1"/>
</dbReference>
<dbReference type="InterPro" id="IPR013320">
    <property type="entry name" value="ConA-like_dom_sf"/>
</dbReference>
<dbReference type="InterPro" id="IPR015185">
    <property type="entry name" value="Exotox-A_bind"/>
</dbReference>
<dbReference type="InterPro" id="IPR015099">
    <property type="entry name" value="Exotox-A_cataly_dom"/>
</dbReference>
<dbReference type="InterPro" id="IPR015186">
    <property type="entry name" value="Exotox-A_middle_dom"/>
</dbReference>
<dbReference type="InterPro" id="IPR036478">
    <property type="entry name" value="Exotox-A_middle_dom_sf"/>
</dbReference>
<dbReference type="Pfam" id="PF09101">
    <property type="entry name" value="Exotox-A_bind"/>
    <property type="match status" value="1"/>
</dbReference>
<dbReference type="Pfam" id="PF09009">
    <property type="entry name" value="Exotox-A_cataly"/>
    <property type="match status" value="1"/>
</dbReference>
<dbReference type="Pfam" id="PF09102">
    <property type="entry name" value="Exotox-A_target"/>
    <property type="match status" value="1"/>
</dbReference>
<dbReference type="SUPFAM" id="SSF56399">
    <property type="entry name" value="ADP-ribosylation"/>
    <property type="match status" value="1"/>
</dbReference>
<dbReference type="SUPFAM" id="SSF49899">
    <property type="entry name" value="Concanavalin A-like lectins/glucanases"/>
    <property type="match status" value="1"/>
</dbReference>
<dbReference type="SUPFAM" id="SSF56864">
    <property type="entry name" value="Exotoxin A, middle domain"/>
    <property type="match status" value="1"/>
</dbReference>